<protein>
    <recommendedName>
        <fullName evidence="1">Large ribosomal subunit protein bL36</fullName>
    </recommendedName>
    <alternativeName>
        <fullName evidence="2">50S ribosomal protein L36</fullName>
    </alternativeName>
</protein>
<keyword id="KW-0002">3D-structure</keyword>
<keyword id="KW-0687">Ribonucleoprotein</keyword>
<keyword id="KW-0689">Ribosomal protein</keyword>
<comment type="similarity">
    <text evidence="1">Belongs to the bacterial ribosomal protein bL36 family.</text>
</comment>
<reference key="1">
    <citation type="journal article" date="2004" name="Nat. Biotechnol.">
        <title>The genome sequence of the extreme thermophile Thermus thermophilus.</title>
        <authorList>
            <person name="Henne A."/>
            <person name="Brueggemann H."/>
            <person name="Raasch C."/>
            <person name="Wiezer A."/>
            <person name="Hartsch T."/>
            <person name="Liesegang H."/>
            <person name="Johann A."/>
            <person name="Lienard T."/>
            <person name="Gohl O."/>
            <person name="Martinez-Arias R."/>
            <person name="Jacobi C."/>
            <person name="Starkuviene V."/>
            <person name="Schlenczeck S."/>
            <person name="Dencker S."/>
            <person name="Huber R."/>
            <person name="Klenk H.-P."/>
            <person name="Kramer W."/>
            <person name="Merkl R."/>
            <person name="Gottschalk G."/>
            <person name="Fritz H.-J."/>
        </authorList>
    </citation>
    <scope>NUCLEOTIDE SEQUENCE [LARGE SCALE GENOMIC DNA]</scope>
    <source>
        <strain>ATCC BAA-163 / DSM 7039 / HB27</strain>
    </source>
</reference>
<dbReference type="EMBL" id="AE017221">
    <property type="protein sequence ID" value="AAS81646.1"/>
    <property type="molecule type" value="Genomic_DNA"/>
</dbReference>
<dbReference type="RefSeq" id="WP_008633370.1">
    <property type="nucleotide sequence ID" value="NC_005835.1"/>
</dbReference>
<dbReference type="PDB" id="4V4I">
    <property type="method" value="X-ray"/>
    <property type="resolution" value="3.71 A"/>
    <property type="chains" value="b=1-37"/>
</dbReference>
<dbReference type="PDB" id="4V4J">
    <property type="method" value="X-ray"/>
    <property type="resolution" value="3.83 A"/>
    <property type="chains" value="b=1-37"/>
</dbReference>
<dbReference type="PDB" id="4V9J">
    <property type="method" value="X-ray"/>
    <property type="resolution" value="3.86 A"/>
    <property type="chains" value="B9/D9=1-37"/>
</dbReference>
<dbReference type="PDB" id="4V9K">
    <property type="method" value="X-ray"/>
    <property type="resolution" value="3.50 A"/>
    <property type="chains" value="B9/D9=1-37"/>
</dbReference>
<dbReference type="PDB" id="4V9L">
    <property type="method" value="X-ray"/>
    <property type="resolution" value="3.50 A"/>
    <property type="chains" value="B9/D9=1-37"/>
</dbReference>
<dbReference type="PDB" id="4V9M">
    <property type="method" value="X-ray"/>
    <property type="resolution" value="4.00 A"/>
    <property type="chains" value="B9/D9=1-37"/>
</dbReference>
<dbReference type="PDB" id="4W29">
    <property type="method" value="X-ray"/>
    <property type="resolution" value="3.80 A"/>
    <property type="chains" value="B9/D9=1-37"/>
</dbReference>
<dbReference type="PDB" id="5J4D">
    <property type="method" value="X-ray"/>
    <property type="resolution" value="3.10 A"/>
    <property type="chains" value="GA/LC=1-37"/>
</dbReference>
<dbReference type="PDB" id="5V8I">
    <property type="method" value="X-ray"/>
    <property type="resolution" value="3.25 A"/>
    <property type="chains" value="19/29=1-37"/>
</dbReference>
<dbReference type="PDB" id="6B4V">
    <property type="method" value="X-ray"/>
    <property type="resolution" value="3.40 A"/>
    <property type="chains" value="GA/KC=1-37"/>
</dbReference>
<dbReference type="PDB" id="6BOH">
    <property type="method" value="X-ray"/>
    <property type="resolution" value="3.40 A"/>
    <property type="chains" value="GA/LC=1-37"/>
</dbReference>
<dbReference type="PDB" id="6BOK">
    <property type="method" value="X-ray"/>
    <property type="resolution" value="3.55 A"/>
    <property type="chains" value="GA/JC=1-37"/>
</dbReference>
<dbReference type="PDB" id="6N1D">
    <property type="method" value="X-ray"/>
    <property type="resolution" value="3.20 A"/>
    <property type="chains" value="AL36/BL36=1-37"/>
</dbReference>
<dbReference type="PDBsum" id="4V4I"/>
<dbReference type="PDBsum" id="4V4J"/>
<dbReference type="PDBsum" id="4V9J"/>
<dbReference type="PDBsum" id="4V9K"/>
<dbReference type="PDBsum" id="4V9L"/>
<dbReference type="PDBsum" id="4V9M"/>
<dbReference type="PDBsum" id="4W29"/>
<dbReference type="PDBsum" id="5J4D"/>
<dbReference type="PDBsum" id="5V8I"/>
<dbReference type="PDBsum" id="6B4V"/>
<dbReference type="PDBsum" id="6BOH"/>
<dbReference type="PDBsum" id="6BOK"/>
<dbReference type="PDBsum" id="6N1D"/>
<dbReference type="EMDB" id="EMD-4475"/>
<dbReference type="SMR" id="Q72I28"/>
<dbReference type="IntAct" id="Q72I28">
    <property type="interactions" value="1"/>
</dbReference>
<dbReference type="GeneID" id="3167970"/>
<dbReference type="KEGG" id="tth:TT_C1304"/>
<dbReference type="eggNOG" id="COG0257">
    <property type="taxonomic scope" value="Bacteria"/>
</dbReference>
<dbReference type="HOGENOM" id="CLU_135723_6_2_0"/>
<dbReference type="OrthoDB" id="9802520at2"/>
<dbReference type="Proteomes" id="UP000000592">
    <property type="component" value="Chromosome"/>
</dbReference>
<dbReference type="GO" id="GO:0005737">
    <property type="term" value="C:cytoplasm"/>
    <property type="evidence" value="ECO:0007669"/>
    <property type="project" value="UniProtKB-ARBA"/>
</dbReference>
<dbReference type="GO" id="GO:1990904">
    <property type="term" value="C:ribonucleoprotein complex"/>
    <property type="evidence" value="ECO:0007669"/>
    <property type="project" value="UniProtKB-KW"/>
</dbReference>
<dbReference type="GO" id="GO:0005840">
    <property type="term" value="C:ribosome"/>
    <property type="evidence" value="ECO:0007669"/>
    <property type="project" value="UniProtKB-KW"/>
</dbReference>
<dbReference type="GO" id="GO:0003735">
    <property type="term" value="F:structural constituent of ribosome"/>
    <property type="evidence" value="ECO:0007669"/>
    <property type="project" value="InterPro"/>
</dbReference>
<dbReference type="GO" id="GO:0006412">
    <property type="term" value="P:translation"/>
    <property type="evidence" value="ECO:0007669"/>
    <property type="project" value="UniProtKB-UniRule"/>
</dbReference>
<dbReference type="HAMAP" id="MF_00251">
    <property type="entry name" value="Ribosomal_bL36"/>
    <property type="match status" value="1"/>
</dbReference>
<dbReference type="InterPro" id="IPR000473">
    <property type="entry name" value="Ribosomal_bL36"/>
</dbReference>
<dbReference type="InterPro" id="IPR035977">
    <property type="entry name" value="Ribosomal_bL36_sp"/>
</dbReference>
<dbReference type="NCBIfam" id="TIGR01022">
    <property type="entry name" value="rpmJ_bact"/>
    <property type="match status" value="1"/>
</dbReference>
<dbReference type="PANTHER" id="PTHR42888">
    <property type="entry name" value="50S RIBOSOMAL PROTEIN L36, CHLOROPLASTIC"/>
    <property type="match status" value="1"/>
</dbReference>
<dbReference type="PANTHER" id="PTHR42888:SF1">
    <property type="entry name" value="LARGE RIBOSOMAL SUBUNIT PROTEIN BL36C"/>
    <property type="match status" value="1"/>
</dbReference>
<dbReference type="Pfam" id="PF00444">
    <property type="entry name" value="Ribosomal_L36"/>
    <property type="match status" value="1"/>
</dbReference>
<dbReference type="SUPFAM" id="SSF57840">
    <property type="entry name" value="Ribosomal protein L36"/>
    <property type="match status" value="1"/>
</dbReference>
<dbReference type="PROSITE" id="PS00828">
    <property type="entry name" value="RIBOSOMAL_L36"/>
    <property type="match status" value="1"/>
</dbReference>
<name>RL36_THET2</name>
<evidence type="ECO:0000255" key="1">
    <source>
        <dbReference type="HAMAP-Rule" id="MF_00251"/>
    </source>
</evidence>
<evidence type="ECO:0000305" key="2"/>
<evidence type="ECO:0007829" key="3">
    <source>
        <dbReference type="PDB" id="4V9K"/>
    </source>
</evidence>
<organism>
    <name type="scientific">Thermus thermophilus (strain ATCC BAA-163 / DSM 7039 / HB27)</name>
    <dbReference type="NCBI Taxonomy" id="262724"/>
    <lineage>
        <taxon>Bacteria</taxon>
        <taxon>Thermotogati</taxon>
        <taxon>Deinococcota</taxon>
        <taxon>Deinococci</taxon>
        <taxon>Thermales</taxon>
        <taxon>Thermaceae</taxon>
        <taxon>Thermus</taxon>
    </lineage>
</organism>
<proteinExistence type="evidence at protein level"/>
<gene>
    <name evidence="1" type="primary">rpmJ</name>
    <name type="ordered locus">TT_C1304</name>
</gene>
<feature type="chain" id="PRO_0000126283" description="Large ribosomal subunit protein bL36">
    <location>
        <begin position="1"/>
        <end position="37"/>
    </location>
</feature>
<feature type="strand" evidence="3">
    <location>
        <begin position="3"/>
        <end position="6"/>
    </location>
</feature>
<feature type="strand" evidence="3">
    <location>
        <begin position="11"/>
        <end position="13"/>
    </location>
</feature>
<feature type="strand" evidence="3">
    <location>
        <begin position="16"/>
        <end position="19"/>
    </location>
</feature>
<feature type="strand" evidence="3">
    <location>
        <begin position="22"/>
        <end position="25"/>
    </location>
</feature>
<feature type="helix" evidence="3">
    <location>
        <begin position="30"/>
        <end position="32"/>
    </location>
</feature>
<feature type="strand" evidence="3">
    <location>
        <begin position="34"/>
        <end position="36"/>
    </location>
</feature>
<accession>Q72I28</accession>
<sequence length="37" mass="4421">MKVRASVKRICDKCKVIRRHGRVYVICENPKHKQRQG</sequence>